<feature type="peptide" id="PRO_0000335995" description="Lebetin-2-alpha" evidence="3">
    <location>
        <begin position="1"/>
        <end position="38"/>
    </location>
</feature>
<feature type="peptide" id="PRO_0000335996" description="Lebetin-1-alpha" evidence="3">
    <location>
        <begin position="1"/>
        <end position="13"/>
    </location>
</feature>
<feature type="peptide" id="PRO_0000335997" description="Lebetin-2-beta" evidence="3">
    <location>
        <begin position="2"/>
        <end position="38"/>
    </location>
</feature>
<feature type="peptide" id="PRO_0000335998" description="Lebetin-1-beta" evidence="3">
    <location>
        <begin position="2"/>
        <end position="13"/>
    </location>
</feature>
<feature type="peptide" id="PRO_0000335999" description="Lebetin-1-gamma" evidence="3">
    <location>
        <begin position="3"/>
        <end position="13"/>
    </location>
</feature>
<feature type="region of interest" description="Disordered" evidence="1">
    <location>
        <begin position="1"/>
        <end position="38"/>
    </location>
</feature>
<feature type="disulfide bond" evidence="5 12">
    <location>
        <begin position="14"/>
        <end position="30"/>
    </location>
</feature>
<feature type="mutagenesis site" description="Little decrease of antiplatelet activity." evidence="2">
    <original>N</original>
    <variation>A</variation>
    <location>
        <position position="3"/>
    </location>
</feature>
<feature type="mutagenesis site" description="10-fold increase of antiplatelet activity." evidence="2">
    <original>K</original>
    <variation>A</variation>
    <location>
        <position position="4"/>
    </location>
</feature>
<feature type="mutagenesis site" description="Important decrease of antiplatelet activity." evidence="2">
    <original>P</original>
    <variation>A</variation>
    <location>
        <position position="5"/>
    </location>
</feature>
<feature type="mutagenesis site" description="10-fold increase of antiplatelet activity." evidence="2">
    <original>P</original>
    <variation>A</variation>
    <location>
        <position position="6"/>
    </location>
</feature>
<feature type="mutagenesis site" description="Little decrease of antiplatelet activity." evidence="2">
    <original>K</original>
    <variation>A</variation>
    <location>
        <position position="7"/>
    </location>
</feature>
<feature type="mutagenesis site" description="10-fold increase of antiplatelet activity." evidence="2">
    <original>K</original>
    <variation>A</variation>
    <location>
        <position position="8"/>
    </location>
</feature>
<feature type="mutagenesis site" description="Important decrease of antiplatelet activity." evidence="2">
    <original>G</original>
    <variation>A</variation>
    <location>
        <position position="9"/>
    </location>
</feature>
<feature type="mutagenesis site" description="Important decrease of antiplatelet activity." evidence="2">
    <original>P</original>
    <variation>A</variation>
    <location>
        <position position="10"/>
    </location>
</feature>
<feature type="mutagenesis site" description="Important decrease of antiplatelet activity." evidence="2">
    <original>P</original>
    <variation>A</variation>
    <location>
        <position position="11"/>
    </location>
</feature>
<feature type="mutagenesis site" description="Important decrease of antiplatelet activity." evidence="2">
    <original>N</original>
    <variation>A</variation>
    <location>
        <position position="12"/>
    </location>
</feature>
<feature type="strand" evidence="13">
    <location>
        <begin position="11"/>
        <end position="15"/>
    </location>
</feature>
<name>LEB_MACLB</name>
<reference key="1">
    <citation type="journal article" date="1996" name="FEBS Lett.">
        <title>Novel anti-platelet aggregation polypeptides from Vipera lebetina venom: isolation and characterization.</title>
        <authorList>
            <person name="Barbouche R."/>
            <person name="Marrakchi N."/>
            <person name="Mansuelle P."/>
            <person name="Krifi M.N."/>
            <person name="Fenouillet E."/>
            <person name="Rochat H."/>
            <person name="el Ayeb M."/>
        </authorList>
    </citation>
    <scope>PROTEIN SEQUENCE</scope>
    <scope>FUNCTION</scope>
    <scope>MASS SPECTROMETRY</scope>
    <scope>SUBCELLULAR LOCATION</scope>
    <source>
        <tissue>Venom</tissue>
    </source>
</reference>
<reference key="2">
    <citation type="journal article" date="1998" name="Toxicon">
        <title>Anti-platelet activity of the peptides composing the lebetin 1 family, a new class of inhibitors of platelet aggregation.</title>
        <authorList>
            <person name="Barbouche R."/>
            <person name="Marrakchi N."/>
            <person name="Mabrouk K."/>
            <person name="Krifi M.N."/>
            <person name="Van Rietschoten J."/>
            <person name="Fenouillet E."/>
            <person name="El Ayeb M."/>
            <person name="Rochat H."/>
        </authorList>
    </citation>
    <scope>SYNTHESIS OF 1-13 AND 2-13</scope>
    <scope>FUNCTION</scope>
    <source>
        <tissue>Venom</tissue>
    </source>
</reference>
<reference key="3">
    <citation type="journal article" date="2001" name="Haemostasis">
        <title>Lebetin peptides: potent platelet aggregation inhibitors.</title>
        <authorList>
            <person name="Marrakchi N."/>
            <person name="Mabrouk K."/>
            <person name="Regaya I."/>
            <person name="Sarray S."/>
            <person name="Fathallah M."/>
            <person name="Rochat H."/>
            <person name="El Ayeb M."/>
        </authorList>
    </citation>
    <scope>FUNCTION</scope>
    <scope>MUTAGENESIS OF ASN-3; LYS-4; PRO-5; PRO-6; LYS-7; LYS-8; GLY-9; PRO-10; PRO-11 AND ASN-12</scope>
    <scope>SYNTHESIS 1-38; 1-13; 2-38; 2-13 AND 3-13</scope>
    <scope>MASS SPECTROMETRY</scope>
    <source>
        <tissue>Venom</tissue>
    </source>
</reference>
<reference key="4">
    <citation type="submission" date="2003-07" db="PDB data bank">
        <title>Lebetin peptides, a new class of potent aggregation inhibitors.</title>
        <authorList>
            <person name="Mosbah A."/>
            <person name="Marrakchi N."/>
            <person name="Ganzalez M.J."/>
            <person name="Van Rietschoten J."/>
            <person name="Giralt E."/>
            <person name="El Ayeb M."/>
            <person name="Rochat H."/>
            <person name="Sabatier J.M."/>
            <person name="Darbon H."/>
            <person name="Mabrouk K."/>
        </authorList>
    </citation>
    <scope>STRUCTURE BY NMR OF LEBETIN-2-ALPHA</scope>
    <scope>DISULFIDE BOND</scope>
</reference>
<keyword id="KW-0002">3D-structure</keyword>
<keyword id="KW-0903">Direct protein sequencing</keyword>
<keyword id="KW-1015">Disulfide bond</keyword>
<keyword id="KW-1199">Hemostasis impairing toxin</keyword>
<keyword id="KW-0382">Hypotensive agent</keyword>
<keyword id="KW-1201">Platelet aggregation inhibiting toxin</keyword>
<keyword id="KW-0964">Secreted</keyword>
<keyword id="KW-0800">Toxin</keyword>
<protein>
    <recommendedName>
        <fullName evidence="6 7">Lebetin-2-alpha</fullName>
        <shortName evidence="6">L2alpha</shortName>
    </recommendedName>
    <component>
        <recommendedName>
            <fullName evidence="6 7 8">Lebetin-1-alpha</fullName>
            <shortName evidence="6 8">L1alpha</shortName>
        </recommendedName>
    </component>
    <component>
        <recommendedName>
            <fullName evidence="6 7 8">Lebetin-1-beta</fullName>
            <shortName evidence="6 8">L1beta</shortName>
        </recommendedName>
    </component>
    <component>
        <recommendedName>
            <fullName evidence="6 7 8">Lebetin-1-gamma</fullName>
            <shortName evidence="6 8">L1gamma</shortName>
        </recommendedName>
    </component>
    <component>
        <recommendedName>
            <fullName evidence="6 7">Lebetin-2-beta</fullName>
            <shortName evidence="6">L2beta</shortName>
        </recommendedName>
    </component>
</protein>
<comment type="function">
    <molecule>Lebetin-1-alpha</molecule>
    <text evidence="2 3 4">Inhibits platelet aggregation induced by thrombin, collagen and PAF-acether (PubMed:8769304, PubMed:9839678). Human platelet aggregation induced by thrombin is inhibited by synthetic lebetin-1-alpha with (IC(50)=140 nM) (PubMed:11910186). In vivo, inhibits collagen-induced thrombocytopenia in rats (PubMed:8769304, PubMed:9839678). Is not toxic upon intravenous injection into mice and rats (PubMed:8769304).</text>
</comment>
<comment type="function">
    <molecule>Lebetin-1-beta</molecule>
    <text evidence="2 3 4">Inhibits platelet aggregation induced by thrombin, collagen and PAF-acether (PubMed:8769304, PubMed:9839678). Human platelet aggregation induced by thrombin is inhibited by synthetic lebetin-1-beta with (IC(50)=32 nM) (PubMed:11910186). In vivo, inhibits collagen-induced thrombocytopenia in rats (PubMed:8769304, PubMed:9839678). Is not toxic upon intravenous injection into mice and rats (PubMed:8769304).</text>
</comment>
<comment type="function">
    <molecule>Lebetin-1-gamma</molecule>
    <text evidence="2 3 4">Inhibits platelet aggregation induced by thrombin, collagen and PAF-acether (PubMed:8769304, PubMed:9839678). Human platelet aggregation induced by thrombin is inhibited by synthetic lebetin-1-gamma with (IC(50)=5 nM) (PubMed:11910186). In vivo, inhibits collagen-induced thrombocytopenia in rats (PubMed:8769304, PubMed:9839678). Is not toxic upon intravenous injection into mice and rats (PubMed:8769304).</text>
</comment>
<comment type="function">
    <molecule>Lebetin-2-alpha</molecule>
    <text evidence="2 3 4">Inhibits platelet aggregation induced by thrombin, collagen and PAF-acether (PubMed:8769304, PubMed:9839678). Human platelet aggregation induced by thrombin is inhibited by synthetic lebetin-1-alpha with (IC(50)=2.5 nM) (PubMed:11910186). In vivo, inhibits collagen-induced thrombocytopenia in rats (PubMed:8769304, PubMed:9839678). Is not toxic upon intravenous injection into mice and rats (PubMed:8769304).</text>
</comment>
<comment type="function">
    <molecule>Lebetin-2-beta</molecule>
    <text evidence="3 4">Inhibits platelet aggregation induced by thrombin, collagen and PAF-acether (PubMed:8769304, PubMed:9839678). Human platelet aggregation induced by thrombin is inhibited by synthetic lebetin-1-alpha with (IC(50)=2.8 nM) (PubMed:11910186). In vivo, inhibits collagen-induced thrombocytopenia in rats (PubMed:8769304, PubMed:9839678). Is not toxic upon intravenous injection into mice and rats (PubMed:8769304).</text>
</comment>
<comment type="subcellular location">
    <subcellularLocation>
        <location evidence="3">Secreted</location>
    </subcellularLocation>
</comment>
<comment type="tissue specificity">
    <text evidence="11">Expressed by the venom gland.</text>
</comment>
<comment type="mass spectrometry">
    <molecule>Lebetin-2-alpha</molecule>
</comment>
<comment type="mass spectrometry">
    <molecule>Lebetin-1-alpha</molecule>
</comment>
<comment type="mass spectrometry">
    <molecule>Lebetin-2-beta</molecule>
</comment>
<comment type="mass spectrometry">
    <molecule>Lebetin-1-beta</molecule>
</comment>
<comment type="mass spectrometry">
    <molecule>Lebetin-1-gamma</molecule>
</comment>
<comment type="miscellaneous">
    <text evidence="10">Mutagenesis was carried out on lebetin-1-gamma.</text>
</comment>
<comment type="similarity">
    <text evidence="9">Belongs to the natriuretic peptide family.</text>
</comment>
<accession>Q7LZ09</accession>
<accession>Q7LZ10</accession>
<dbReference type="PIR" id="S71380">
    <property type="entry name" value="S71380"/>
</dbReference>
<dbReference type="PIR" id="S71381">
    <property type="entry name" value="S71381"/>
</dbReference>
<dbReference type="PDB" id="1Q01">
    <property type="method" value="NMR"/>
    <property type="chains" value="A=1-38"/>
</dbReference>
<dbReference type="PDBsum" id="1Q01"/>
<dbReference type="SMR" id="Q7LZ09"/>
<dbReference type="EvolutionaryTrace" id="Q7LZ09"/>
<dbReference type="GO" id="GO:0005576">
    <property type="term" value="C:extracellular region"/>
    <property type="evidence" value="ECO:0007669"/>
    <property type="project" value="UniProtKB-SubCell"/>
</dbReference>
<dbReference type="GO" id="GO:0005179">
    <property type="term" value="F:hormone activity"/>
    <property type="evidence" value="ECO:0007669"/>
    <property type="project" value="InterPro"/>
</dbReference>
<dbReference type="GO" id="GO:0090729">
    <property type="term" value="F:toxin activity"/>
    <property type="evidence" value="ECO:0007669"/>
    <property type="project" value="UniProtKB-KW"/>
</dbReference>
<dbReference type="GO" id="GO:0008217">
    <property type="term" value="P:regulation of blood pressure"/>
    <property type="evidence" value="ECO:0007669"/>
    <property type="project" value="UniProtKB-KW"/>
</dbReference>
<dbReference type="InterPro" id="IPR000663">
    <property type="entry name" value="Natr_peptide"/>
</dbReference>
<dbReference type="InterPro" id="IPR030480">
    <property type="entry name" value="Natr_peptide_CS"/>
</dbReference>
<dbReference type="InterPro" id="IPR002408">
    <property type="entry name" value="Natriuretic_peptide_brain"/>
</dbReference>
<dbReference type="Pfam" id="PF00212">
    <property type="entry name" value="ANP"/>
    <property type="match status" value="1"/>
</dbReference>
<dbReference type="PRINTS" id="PR00712">
    <property type="entry name" value="BNATPEPTIDE"/>
</dbReference>
<dbReference type="PRINTS" id="PR00710">
    <property type="entry name" value="NATPEPTIDES"/>
</dbReference>
<dbReference type="SMART" id="SM00183">
    <property type="entry name" value="NAT_PEP"/>
    <property type="match status" value="1"/>
</dbReference>
<dbReference type="PROSITE" id="PS00263">
    <property type="entry name" value="NATRIURETIC_PEPTIDE"/>
    <property type="match status" value="1"/>
</dbReference>
<organism>
    <name type="scientific">Macrovipera lebetinus</name>
    <name type="common">Levantine viper</name>
    <name type="synonym">Vipera lebetina</name>
    <dbReference type="NCBI Taxonomy" id="3148341"/>
    <lineage>
        <taxon>Eukaryota</taxon>
        <taxon>Metazoa</taxon>
        <taxon>Chordata</taxon>
        <taxon>Craniata</taxon>
        <taxon>Vertebrata</taxon>
        <taxon>Euteleostomi</taxon>
        <taxon>Lepidosauria</taxon>
        <taxon>Squamata</taxon>
        <taxon>Bifurcata</taxon>
        <taxon>Unidentata</taxon>
        <taxon>Episquamata</taxon>
        <taxon>Toxicofera</taxon>
        <taxon>Serpentes</taxon>
        <taxon>Colubroidea</taxon>
        <taxon>Viperidae</taxon>
        <taxon>Viperinae</taxon>
        <taxon>Macrovipera</taxon>
    </lineage>
</organism>
<evidence type="ECO:0000256" key="1">
    <source>
        <dbReference type="SAM" id="MobiDB-lite"/>
    </source>
</evidence>
<evidence type="ECO:0000269" key="2">
    <source>
    </source>
</evidence>
<evidence type="ECO:0000269" key="3">
    <source>
    </source>
</evidence>
<evidence type="ECO:0000269" key="4">
    <source>
    </source>
</evidence>
<evidence type="ECO:0000269" key="5">
    <source ref="4"/>
</evidence>
<evidence type="ECO:0000303" key="6">
    <source>
    </source>
</evidence>
<evidence type="ECO:0000303" key="7">
    <source>
    </source>
</evidence>
<evidence type="ECO:0000303" key="8">
    <source>
    </source>
</evidence>
<evidence type="ECO:0000305" key="9"/>
<evidence type="ECO:0000305" key="10">
    <source>
    </source>
</evidence>
<evidence type="ECO:0000305" key="11">
    <source>
    </source>
</evidence>
<evidence type="ECO:0000312" key="12">
    <source>
        <dbReference type="PDB" id="1Q01"/>
    </source>
</evidence>
<evidence type="ECO:0007829" key="13">
    <source>
        <dbReference type="PDB" id="1Q01"/>
    </source>
</evidence>
<proteinExistence type="evidence at protein level"/>
<sequence>GDNKPPKKGPPNGCFGHKIDRIGSHSGLGCNKVDDNKG</sequence>